<protein>
    <recommendedName>
        <fullName evidence="1">Cysteine--tRNA ligase</fullName>
        <ecNumber evidence="1">6.1.1.16</ecNumber>
    </recommendedName>
    <alternativeName>
        <fullName evidence="1">Cysteinyl-tRNA synthetase</fullName>
        <shortName evidence="1">CysRS</shortName>
    </alternativeName>
</protein>
<accession>Q5HUZ0</accession>
<organism>
    <name type="scientific">Campylobacter jejuni (strain RM1221)</name>
    <dbReference type="NCBI Taxonomy" id="195099"/>
    <lineage>
        <taxon>Bacteria</taxon>
        <taxon>Pseudomonadati</taxon>
        <taxon>Campylobacterota</taxon>
        <taxon>Epsilonproteobacteria</taxon>
        <taxon>Campylobacterales</taxon>
        <taxon>Campylobacteraceae</taxon>
        <taxon>Campylobacter</taxon>
    </lineage>
</organism>
<feature type="chain" id="PRO_0000159372" description="Cysteine--tRNA ligase">
    <location>
        <begin position="1"/>
        <end position="462"/>
    </location>
</feature>
<feature type="short sequence motif" description="'HIGH' region">
    <location>
        <begin position="26"/>
        <end position="36"/>
    </location>
</feature>
<feature type="short sequence motif" description="'KMSKS' region">
    <location>
        <begin position="256"/>
        <end position="260"/>
    </location>
</feature>
<feature type="binding site" evidence="1">
    <location>
        <position position="24"/>
    </location>
    <ligand>
        <name>Zn(2+)</name>
        <dbReference type="ChEBI" id="CHEBI:29105"/>
    </ligand>
</feature>
<feature type="binding site" evidence="1">
    <location>
        <position position="199"/>
    </location>
    <ligand>
        <name>Zn(2+)</name>
        <dbReference type="ChEBI" id="CHEBI:29105"/>
    </ligand>
</feature>
<feature type="binding site" evidence="1">
    <location>
        <position position="224"/>
    </location>
    <ligand>
        <name>Zn(2+)</name>
        <dbReference type="ChEBI" id="CHEBI:29105"/>
    </ligand>
</feature>
<feature type="binding site" evidence="1">
    <location>
        <position position="228"/>
    </location>
    <ligand>
        <name>Zn(2+)</name>
        <dbReference type="ChEBI" id="CHEBI:29105"/>
    </ligand>
</feature>
<feature type="binding site" evidence="1">
    <location>
        <position position="259"/>
    </location>
    <ligand>
        <name>ATP</name>
        <dbReference type="ChEBI" id="CHEBI:30616"/>
    </ligand>
</feature>
<gene>
    <name evidence="1" type="primary">cysS</name>
    <name type="ordered locus">CJE0893</name>
</gene>
<evidence type="ECO:0000255" key="1">
    <source>
        <dbReference type="HAMAP-Rule" id="MF_00041"/>
    </source>
</evidence>
<keyword id="KW-0030">Aminoacyl-tRNA synthetase</keyword>
<keyword id="KW-0067">ATP-binding</keyword>
<keyword id="KW-0963">Cytoplasm</keyword>
<keyword id="KW-0436">Ligase</keyword>
<keyword id="KW-0479">Metal-binding</keyword>
<keyword id="KW-0547">Nucleotide-binding</keyword>
<keyword id="KW-0648">Protein biosynthesis</keyword>
<keyword id="KW-0862">Zinc</keyword>
<proteinExistence type="inferred from homology"/>
<reference key="1">
    <citation type="journal article" date="2005" name="PLoS Biol.">
        <title>Major structural differences and novel potential virulence mechanisms from the genomes of multiple Campylobacter species.</title>
        <authorList>
            <person name="Fouts D.E."/>
            <person name="Mongodin E.F."/>
            <person name="Mandrell R.E."/>
            <person name="Miller W.G."/>
            <person name="Rasko D.A."/>
            <person name="Ravel J."/>
            <person name="Brinkac L.M."/>
            <person name="DeBoy R.T."/>
            <person name="Parker C.T."/>
            <person name="Daugherty S.C."/>
            <person name="Dodson R.J."/>
            <person name="Durkin A.S."/>
            <person name="Madupu R."/>
            <person name="Sullivan S.A."/>
            <person name="Shetty J.U."/>
            <person name="Ayodeji M.A."/>
            <person name="Shvartsbeyn A."/>
            <person name="Schatz M.C."/>
            <person name="Badger J.H."/>
            <person name="Fraser C.M."/>
            <person name="Nelson K.E."/>
        </authorList>
    </citation>
    <scope>NUCLEOTIDE SEQUENCE [LARGE SCALE GENOMIC DNA]</scope>
    <source>
        <strain>RM1221</strain>
    </source>
</reference>
<sequence length="462" mass="53644">MRLLDSVTKEKIKLDKKDISIYLCGPTVYDDAHLGHARSSVCFDLLRRVLLAQGNRVKFARNYTDIDDKILKKMTQSGQTLEEITEFYIKSYEEDMRALNVLDPDFKPRATHYITAMLDLIKKLAKDGFVYTLEDGIYFDTSKDEKYLSLSNRNLEENISRLSNEVQKRNESDFVLWKFDENFYENEFGKGRPGWHTECVAMIDSIFENTLDIHAGGIDLLFPHHENEAAQCRCGCKRKLANIWLHNGFVKIDGEKMSKSLNNSFFIKDALKEFMGEALRFYLLSSHYRSHFNYSLSDLENAKKRLDKFYRLKKRLDLGEISDFDVLNDIEIKSEIAKQILEILNDDLNVSKALALLDDFISSANLELDKESKNKILKQNIKEALSELAKIFGFGFMDTTLYFQWGVSKEEREEIEKLILERTEAKKNKDFNTADAIREQLNSKKITLLDTPNGTIWEKINA</sequence>
<name>SYC_CAMJR</name>
<comment type="catalytic activity">
    <reaction evidence="1">
        <text>tRNA(Cys) + L-cysteine + ATP = L-cysteinyl-tRNA(Cys) + AMP + diphosphate</text>
        <dbReference type="Rhea" id="RHEA:17773"/>
        <dbReference type="Rhea" id="RHEA-COMP:9661"/>
        <dbReference type="Rhea" id="RHEA-COMP:9679"/>
        <dbReference type="ChEBI" id="CHEBI:30616"/>
        <dbReference type="ChEBI" id="CHEBI:33019"/>
        <dbReference type="ChEBI" id="CHEBI:35235"/>
        <dbReference type="ChEBI" id="CHEBI:78442"/>
        <dbReference type="ChEBI" id="CHEBI:78517"/>
        <dbReference type="ChEBI" id="CHEBI:456215"/>
        <dbReference type="EC" id="6.1.1.16"/>
    </reaction>
</comment>
<comment type="cofactor">
    <cofactor evidence="1">
        <name>Zn(2+)</name>
        <dbReference type="ChEBI" id="CHEBI:29105"/>
    </cofactor>
    <text evidence="1">Binds 1 zinc ion per subunit.</text>
</comment>
<comment type="subunit">
    <text evidence="1">Monomer.</text>
</comment>
<comment type="subcellular location">
    <subcellularLocation>
        <location evidence="1">Cytoplasm</location>
    </subcellularLocation>
</comment>
<comment type="similarity">
    <text evidence="1">Belongs to the class-I aminoacyl-tRNA synthetase family.</text>
</comment>
<dbReference type="EC" id="6.1.1.16" evidence="1"/>
<dbReference type="EMBL" id="CP000025">
    <property type="protein sequence ID" value="AAW35230.1"/>
    <property type="molecule type" value="Genomic_DNA"/>
</dbReference>
<dbReference type="RefSeq" id="WP_002867954.1">
    <property type="nucleotide sequence ID" value="NC_003912.7"/>
</dbReference>
<dbReference type="SMR" id="Q5HUZ0"/>
<dbReference type="KEGG" id="cjr:CJE0893"/>
<dbReference type="HOGENOM" id="CLU_013528_0_1_7"/>
<dbReference type="GO" id="GO:0005829">
    <property type="term" value="C:cytosol"/>
    <property type="evidence" value="ECO:0007669"/>
    <property type="project" value="TreeGrafter"/>
</dbReference>
<dbReference type="GO" id="GO:0005524">
    <property type="term" value="F:ATP binding"/>
    <property type="evidence" value="ECO:0007669"/>
    <property type="project" value="UniProtKB-UniRule"/>
</dbReference>
<dbReference type="GO" id="GO:0004817">
    <property type="term" value="F:cysteine-tRNA ligase activity"/>
    <property type="evidence" value="ECO:0007669"/>
    <property type="project" value="UniProtKB-UniRule"/>
</dbReference>
<dbReference type="GO" id="GO:0008270">
    <property type="term" value="F:zinc ion binding"/>
    <property type="evidence" value="ECO:0007669"/>
    <property type="project" value="UniProtKB-UniRule"/>
</dbReference>
<dbReference type="GO" id="GO:0006423">
    <property type="term" value="P:cysteinyl-tRNA aminoacylation"/>
    <property type="evidence" value="ECO:0007669"/>
    <property type="project" value="UniProtKB-UniRule"/>
</dbReference>
<dbReference type="CDD" id="cd00672">
    <property type="entry name" value="CysRS_core"/>
    <property type="match status" value="1"/>
</dbReference>
<dbReference type="Gene3D" id="1.20.120.1910">
    <property type="entry name" value="Cysteine-tRNA ligase, C-terminal anti-codon recognition domain"/>
    <property type="match status" value="1"/>
</dbReference>
<dbReference type="Gene3D" id="3.40.50.620">
    <property type="entry name" value="HUPs"/>
    <property type="match status" value="1"/>
</dbReference>
<dbReference type="HAMAP" id="MF_00041">
    <property type="entry name" value="Cys_tRNA_synth"/>
    <property type="match status" value="1"/>
</dbReference>
<dbReference type="InterPro" id="IPR015803">
    <property type="entry name" value="Cys-tRNA-ligase"/>
</dbReference>
<dbReference type="InterPro" id="IPR015273">
    <property type="entry name" value="Cys-tRNA-synt_Ia_DALR"/>
</dbReference>
<dbReference type="InterPro" id="IPR024909">
    <property type="entry name" value="Cys-tRNA/MSH_ligase"/>
</dbReference>
<dbReference type="InterPro" id="IPR014729">
    <property type="entry name" value="Rossmann-like_a/b/a_fold"/>
</dbReference>
<dbReference type="InterPro" id="IPR032678">
    <property type="entry name" value="tRNA-synt_1_cat_dom"/>
</dbReference>
<dbReference type="InterPro" id="IPR009080">
    <property type="entry name" value="tRNAsynth_Ia_anticodon-bd"/>
</dbReference>
<dbReference type="NCBIfam" id="TIGR00435">
    <property type="entry name" value="cysS"/>
    <property type="match status" value="1"/>
</dbReference>
<dbReference type="PANTHER" id="PTHR10890:SF3">
    <property type="entry name" value="CYSTEINE--TRNA LIGASE, CYTOPLASMIC"/>
    <property type="match status" value="1"/>
</dbReference>
<dbReference type="PANTHER" id="PTHR10890">
    <property type="entry name" value="CYSTEINYL-TRNA SYNTHETASE"/>
    <property type="match status" value="1"/>
</dbReference>
<dbReference type="Pfam" id="PF09190">
    <property type="entry name" value="DALR_2"/>
    <property type="match status" value="1"/>
</dbReference>
<dbReference type="Pfam" id="PF01406">
    <property type="entry name" value="tRNA-synt_1e"/>
    <property type="match status" value="1"/>
</dbReference>
<dbReference type="PRINTS" id="PR00983">
    <property type="entry name" value="TRNASYNTHCYS"/>
</dbReference>
<dbReference type="SMART" id="SM00840">
    <property type="entry name" value="DALR_2"/>
    <property type="match status" value="1"/>
</dbReference>
<dbReference type="SUPFAM" id="SSF47323">
    <property type="entry name" value="Anticodon-binding domain of a subclass of class I aminoacyl-tRNA synthetases"/>
    <property type="match status" value="1"/>
</dbReference>
<dbReference type="SUPFAM" id="SSF52374">
    <property type="entry name" value="Nucleotidylyl transferase"/>
    <property type="match status" value="1"/>
</dbReference>